<evidence type="ECO:0000255" key="1">
    <source>
        <dbReference type="HAMAP-Rule" id="MF_01706"/>
    </source>
</evidence>
<comment type="function">
    <text evidence="1">Part of the ABC transporter complex FbpABC involved in Fe(3+) ions import. Responsible for energy coupling to the transport system.</text>
</comment>
<comment type="catalytic activity">
    <reaction evidence="1">
        <text>Fe(3+)(out) + ATP + H2O = Fe(3+)(in) + ADP + phosphate + H(+)</text>
        <dbReference type="Rhea" id="RHEA:12332"/>
        <dbReference type="ChEBI" id="CHEBI:15377"/>
        <dbReference type="ChEBI" id="CHEBI:15378"/>
        <dbReference type="ChEBI" id="CHEBI:29034"/>
        <dbReference type="ChEBI" id="CHEBI:30616"/>
        <dbReference type="ChEBI" id="CHEBI:43474"/>
        <dbReference type="ChEBI" id="CHEBI:456216"/>
        <dbReference type="EC" id="7.2.2.7"/>
    </reaction>
</comment>
<comment type="subunit">
    <text evidence="1">The complex is composed of two ATP-binding proteins (FbpC), two transmembrane proteins (FbpB) and a solute-binding protein (FbpA).</text>
</comment>
<comment type="subcellular location">
    <subcellularLocation>
        <location evidence="1">Cell inner membrane</location>
        <topology evidence="1">Peripheral membrane protein</topology>
    </subcellularLocation>
</comment>
<comment type="similarity">
    <text evidence="1">Belongs to the ABC transporter superfamily. Fe(3+) ion importer (TC 3.A.1.10) family.</text>
</comment>
<keyword id="KW-0067">ATP-binding</keyword>
<keyword id="KW-0997">Cell inner membrane</keyword>
<keyword id="KW-1003">Cell membrane</keyword>
<keyword id="KW-0406">Ion transport</keyword>
<keyword id="KW-0408">Iron</keyword>
<keyword id="KW-0410">Iron transport</keyword>
<keyword id="KW-0472">Membrane</keyword>
<keyword id="KW-0547">Nucleotide-binding</keyword>
<keyword id="KW-1185">Reference proteome</keyword>
<keyword id="KW-1278">Translocase</keyword>
<keyword id="KW-0813">Transport</keyword>
<gene>
    <name evidence="1" type="primary">fbpC</name>
    <name type="synonym">afuC</name>
    <name type="ordered locus">PM0957</name>
</gene>
<feature type="chain" id="PRO_0000092357" description="Fe(3+) ions import ATP-binding protein FbpC">
    <location>
        <begin position="1"/>
        <end position="349"/>
    </location>
</feature>
<feature type="domain" description="ABC transporter" evidence="1">
    <location>
        <begin position="7"/>
        <end position="237"/>
    </location>
</feature>
<feature type="binding site" evidence="1">
    <location>
        <begin position="39"/>
        <end position="46"/>
    </location>
    <ligand>
        <name>ATP</name>
        <dbReference type="ChEBI" id="CHEBI:30616"/>
    </ligand>
</feature>
<dbReference type="EC" id="7.2.2.7" evidence="1"/>
<dbReference type="EMBL" id="AE004439">
    <property type="protein sequence ID" value="AAK03041.1"/>
    <property type="molecule type" value="Genomic_DNA"/>
</dbReference>
<dbReference type="RefSeq" id="WP_005722897.1">
    <property type="nucleotide sequence ID" value="NC_002663.1"/>
</dbReference>
<dbReference type="SMR" id="Q9CM80"/>
<dbReference type="STRING" id="272843.PM0957"/>
<dbReference type="EnsemblBacteria" id="AAK03041">
    <property type="protein sequence ID" value="AAK03041"/>
    <property type="gene ID" value="PM0957"/>
</dbReference>
<dbReference type="GeneID" id="77206264"/>
<dbReference type="KEGG" id="pmu:PM0957"/>
<dbReference type="PATRIC" id="fig|272843.6.peg.969"/>
<dbReference type="HOGENOM" id="CLU_000604_1_1_6"/>
<dbReference type="OrthoDB" id="9802264at2"/>
<dbReference type="Proteomes" id="UP000000809">
    <property type="component" value="Chromosome"/>
</dbReference>
<dbReference type="GO" id="GO:0043190">
    <property type="term" value="C:ATP-binding cassette (ABC) transporter complex"/>
    <property type="evidence" value="ECO:0007669"/>
    <property type="project" value="InterPro"/>
</dbReference>
<dbReference type="GO" id="GO:0015408">
    <property type="term" value="F:ABC-type ferric iron transporter activity"/>
    <property type="evidence" value="ECO:0007669"/>
    <property type="project" value="UniProtKB-EC"/>
</dbReference>
<dbReference type="GO" id="GO:0005524">
    <property type="term" value="F:ATP binding"/>
    <property type="evidence" value="ECO:0007669"/>
    <property type="project" value="UniProtKB-KW"/>
</dbReference>
<dbReference type="GO" id="GO:0016887">
    <property type="term" value="F:ATP hydrolysis activity"/>
    <property type="evidence" value="ECO:0007669"/>
    <property type="project" value="InterPro"/>
</dbReference>
<dbReference type="CDD" id="cd03259">
    <property type="entry name" value="ABC_Carb_Solutes_like"/>
    <property type="match status" value="1"/>
</dbReference>
<dbReference type="FunFam" id="3.40.50.300:FF:002767">
    <property type="entry name" value="Fe(3+) ions import ATP-binding protein FbpC"/>
    <property type="match status" value="1"/>
</dbReference>
<dbReference type="Gene3D" id="2.40.50.100">
    <property type="match status" value="1"/>
</dbReference>
<dbReference type="Gene3D" id="3.40.50.300">
    <property type="entry name" value="P-loop containing nucleotide triphosphate hydrolases"/>
    <property type="match status" value="1"/>
</dbReference>
<dbReference type="InterPro" id="IPR003593">
    <property type="entry name" value="AAA+_ATPase"/>
</dbReference>
<dbReference type="InterPro" id="IPR050093">
    <property type="entry name" value="ABC_SmlMolc_Importer"/>
</dbReference>
<dbReference type="InterPro" id="IPR003439">
    <property type="entry name" value="ABC_transporter-like_ATP-bd"/>
</dbReference>
<dbReference type="InterPro" id="IPR017871">
    <property type="entry name" value="ABC_transporter-like_CS"/>
</dbReference>
<dbReference type="InterPro" id="IPR015853">
    <property type="entry name" value="ABC_transpr_FbpC"/>
</dbReference>
<dbReference type="InterPro" id="IPR008995">
    <property type="entry name" value="Mo/tungstate-bd_C_term_dom"/>
</dbReference>
<dbReference type="InterPro" id="IPR027417">
    <property type="entry name" value="P-loop_NTPase"/>
</dbReference>
<dbReference type="InterPro" id="IPR013611">
    <property type="entry name" value="Transp-assoc_OB_typ2"/>
</dbReference>
<dbReference type="NCBIfam" id="NF008513">
    <property type="entry name" value="PRK11432.1"/>
    <property type="match status" value="1"/>
</dbReference>
<dbReference type="PANTHER" id="PTHR42781">
    <property type="entry name" value="SPERMIDINE/PUTRESCINE IMPORT ATP-BINDING PROTEIN POTA"/>
    <property type="match status" value="1"/>
</dbReference>
<dbReference type="PANTHER" id="PTHR42781:SF4">
    <property type="entry name" value="SPERMIDINE_PUTRESCINE IMPORT ATP-BINDING PROTEIN POTA"/>
    <property type="match status" value="1"/>
</dbReference>
<dbReference type="Pfam" id="PF00005">
    <property type="entry name" value="ABC_tran"/>
    <property type="match status" value="1"/>
</dbReference>
<dbReference type="Pfam" id="PF08402">
    <property type="entry name" value="TOBE_2"/>
    <property type="match status" value="1"/>
</dbReference>
<dbReference type="SMART" id="SM00382">
    <property type="entry name" value="AAA"/>
    <property type="match status" value="1"/>
</dbReference>
<dbReference type="SUPFAM" id="SSF50331">
    <property type="entry name" value="MOP-like"/>
    <property type="match status" value="1"/>
</dbReference>
<dbReference type="SUPFAM" id="SSF52540">
    <property type="entry name" value="P-loop containing nucleoside triphosphate hydrolases"/>
    <property type="match status" value="1"/>
</dbReference>
<dbReference type="PROSITE" id="PS00211">
    <property type="entry name" value="ABC_TRANSPORTER_1"/>
    <property type="match status" value="1"/>
</dbReference>
<dbReference type="PROSITE" id="PS50893">
    <property type="entry name" value="ABC_TRANSPORTER_2"/>
    <property type="match status" value="1"/>
</dbReference>
<dbReference type="PROSITE" id="PS51242">
    <property type="entry name" value="FBPC"/>
    <property type="match status" value="1"/>
</dbReference>
<protein>
    <recommendedName>
        <fullName evidence="1">Fe(3+) ions import ATP-binding protein FbpC</fullName>
        <ecNumber evidence="1">7.2.2.7</ecNumber>
    </recommendedName>
</protein>
<reference key="1">
    <citation type="journal article" date="2001" name="Proc. Natl. Acad. Sci. U.S.A.">
        <title>Complete genomic sequence of Pasteurella multocida Pm70.</title>
        <authorList>
            <person name="May B.J."/>
            <person name="Zhang Q."/>
            <person name="Li L.L."/>
            <person name="Paustian M.L."/>
            <person name="Whittam T.S."/>
            <person name="Kapur V."/>
        </authorList>
    </citation>
    <scope>NUCLEOTIDE SEQUENCE [LARGE SCALE GENOMIC DNA]</scope>
    <source>
        <strain>Pm70</strain>
    </source>
</reference>
<name>FBPC_PASMU</name>
<accession>Q9CM80</accession>
<sequence>MSNNDFLVLKNVTKAFGKAVVIDNLDLSIKRGTMVTLLGPSGCGKTTVLRLVAGLESPTSGQIFIDGEDVTKSSIQNRDICIVFQSYALFPHMSIGDNVGYGLKMQGVSKEERAKRVKEALELVDLAGFEDRYVDQISGGQQQRVALARALVLKPKVLLFDEPLSNLDANLRRSMREKIRELQQRLGITSLYVTHDQTEAFAVSDEVIVMHKGKIMQKAPAKELYLRPNSLFLANFMGESSIFQGTLQQDQVTVNGYQFKLNNAAQFGLTDGACLVGIRPEAISFKETGEAAQRCSIKSAVYMGNHWEIVANWGGQDLLVNTNPEQFNPELKEAYVHLAEHGVFLLKPE</sequence>
<proteinExistence type="inferred from homology"/>
<organism>
    <name type="scientific">Pasteurella multocida (strain Pm70)</name>
    <dbReference type="NCBI Taxonomy" id="272843"/>
    <lineage>
        <taxon>Bacteria</taxon>
        <taxon>Pseudomonadati</taxon>
        <taxon>Pseudomonadota</taxon>
        <taxon>Gammaproteobacteria</taxon>
        <taxon>Pasteurellales</taxon>
        <taxon>Pasteurellaceae</taxon>
        <taxon>Pasteurella</taxon>
    </lineage>
</organism>